<evidence type="ECO:0000255" key="1">
    <source>
        <dbReference type="HAMAP-Rule" id="MF_01366"/>
    </source>
</evidence>
<evidence type="ECO:0000305" key="2"/>
<accession>A4QBS3</accession>
<organism>
    <name type="scientific">Corynebacterium glutamicum (strain R)</name>
    <dbReference type="NCBI Taxonomy" id="340322"/>
    <lineage>
        <taxon>Bacteria</taxon>
        <taxon>Bacillati</taxon>
        <taxon>Actinomycetota</taxon>
        <taxon>Actinomycetes</taxon>
        <taxon>Mycobacteriales</taxon>
        <taxon>Corynebacteriaceae</taxon>
        <taxon>Corynebacterium</taxon>
    </lineage>
</organism>
<keyword id="KW-0687">Ribonucleoprotein</keyword>
<keyword id="KW-0689">Ribosomal protein</keyword>
<comment type="function">
    <text evidence="1">This protein is one of the early assembly proteins of the 50S ribosomal subunit, although it is not seen to bind rRNA by itself. It is important during the early stages of 50S assembly.</text>
</comment>
<comment type="subunit">
    <text evidence="1">Part of the 50S ribosomal subunit.</text>
</comment>
<comment type="similarity">
    <text evidence="1">Belongs to the universal ribosomal protein uL13 family.</text>
</comment>
<reference key="1">
    <citation type="journal article" date="2007" name="Microbiology">
        <title>Comparative analysis of the Corynebacterium glutamicum group and complete genome sequence of strain R.</title>
        <authorList>
            <person name="Yukawa H."/>
            <person name="Omumasaba C.A."/>
            <person name="Nonaka H."/>
            <person name="Kos P."/>
            <person name="Okai N."/>
            <person name="Suzuki N."/>
            <person name="Suda M."/>
            <person name="Tsuge Y."/>
            <person name="Watanabe J."/>
            <person name="Ikeda Y."/>
            <person name="Vertes A.A."/>
            <person name="Inui M."/>
        </authorList>
    </citation>
    <scope>NUCLEOTIDE SEQUENCE [LARGE SCALE GENOMIC DNA]</scope>
    <source>
        <strain>R</strain>
    </source>
</reference>
<protein>
    <recommendedName>
        <fullName evidence="1">Large ribosomal subunit protein uL13</fullName>
    </recommendedName>
    <alternativeName>
        <fullName evidence="2">50S ribosomal protein L13</fullName>
    </alternativeName>
</protein>
<gene>
    <name evidence="1" type="primary">rplM</name>
    <name type="ordered locus">cgR_0699</name>
</gene>
<proteinExistence type="inferred from homology"/>
<feature type="chain" id="PRO_1000055372" description="Large ribosomal subunit protein uL13">
    <location>
        <begin position="1"/>
        <end position="147"/>
    </location>
</feature>
<sequence length="147" mass="16281">MSTYHPKSGDITRKWYVIDATDVVLGRLATHAADLLRGKGKPLYAPNVDCGDHVIVINADKVAVTSNKREREMRYRHSGYPGGLKSMTLGRSLDLHPERTIEDSIVGMMPHNKLTAASAKKLHVFSGSEHPYAAQKPEAYEIKKVAQ</sequence>
<dbReference type="EMBL" id="AP009044">
    <property type="protein sequence ID" value="BAF53670.1"/>
    <property type="molecule type" value="Genomic_DNA"/>
</dbReference>
<dbReference type="RefSeq" id="WP_003854535.1">
    <property type="nucleotide sequence ID" value="NC_009342.1"/>
</dbReference>
<dbReference type="SMR" id="A4QBS3"/>
<dbReference type="GeneID" id="1018585"/>
<dbReference type="KEGG" id="cgt:cgR_0699"/>
<dbReference type="HOGENOM" id="CLU_082184_2_2_11"/>
<dbReference type="PhylomeDB" id="A4QBS3"/>
<dbReference type="Proteomes" id="UP000006698">
    <property type="component" value="Chromosome"/>
</dbReference>
<dbReference type="GO" id="GO:0022625">
    <property type="term" value="C:cytosolic large ribosomal subunit"/>
    <property type="evidence" value="ECO:0007669"/>
    <property type="project" value="TreeGrafter"/>
</dbReference>
<dbReference type="GO" id="GO:0003729">
    <property type="term" value="F:mRNA binding"/>
    <property type="evidence" value="ECO:0007669"/>
    <property type="project" value="TreeGrafter"/>
</dbReference>
<dbReference type="GO" id="GO:0003735">
    <property type="term" value="F:structural constituent of ribosome"/>
    <property type="evidence" value="ECO:0007669"/>
    <property type="project" value="InterPro"/>
</dbReference>
<dbReference type="GO" id="GO:0017148">
    <property type="term" value="P:negative regulation of translation"/>
    <property type="evidence" value="ECO:0007669"/>
    <property type="project" value="TreeGrafter"/>
</dbReference>
<dbReference type="GO" id="GO:0006412">
    <property type="term" value="P:translation"/>
    <property type="evidence" value="ECO:0007669"/>
    <property type="project" value="UniProtKB-UniRule"/>
</dbReference>
<dbReference type="CDD" id="cd00392">
    <property type="entry name" value="Ribosomal_L13"/>
    <property type="match status" value="1"/>
</dbReference>
<dbReference type="Gene3D" id="3.90.1180.10">
    <property type="entry name" value="Ribosomal protein L13"/>
    <property type="match status" value="1"/>
</dbReference>
<dbReference type="HAMAP" id="MF_01366">
    <property type="entry name" value="Ribosomal_uL13"/>
    <property type="match status" value="1"/>
</dbReference>
<dbReference type="InterPro" id="IPR005822">
    <property type="entry name" value="Ribosomal_uL13"/>
</dbReference>
<dbReference type="InterPro" id="IPR005823">
    <property type="entry name" value="Ribosomal_uL13_bac-type"/>
</dbReference>
<dbReference type="InterPro" id="IPR036899">
    <property type="entry name" value="Ribosomal_uL13_sf"/>
</dbReference>
<dbReference type="NCBIfam" id="TIGR01066">
    <property type="entry name" value="rplM_bact"/>
    <property type="match status" value="1"/>
</dbReference>
<dbReference type="PANTHER" id="PTHR11545:SF2">
    <property type="entry name" value="LARGE RIBOSOMAL SUBUNIT PROTEIN UL13M"/>
    <property type="match status" value="1"/>
</dbReference>
<dbReference type="PANTHER" id="PTHR11545">
    <property type="entry name" value="RIBOSOMAL PROTEIN L13"/>
    <property type="match status" value="1"/>
</dbReference>
<dbReference type="Pfam" id="PF00572">
    <property type="entry name" value="Ribosomal_L13"/>
    <property type="match status" value="1"/>
</dbReference>
<dbReference type="PIRSF" id="PIRSF002181">
    <property type="entry name" value="Ribosomal_L13"/>
    <property type="match status" value="1"/>
</dbReference>
<dbReference type="SUPFAM" id="SSF52161">
    <property type="entry name" value="Ribosomal protein L13"/>
    <property type="match status" value="1"/>
</dbReference>
<name>RL13_CORGB</name>